<evidence type="ECO:0000255" key="1">
    <source>
        <dbReference type="HAMAP-Rule" id="MF_01365"/>
    </source>
</evidence>
<evidence type="ECO:0000305" key="2"/>
<feature type="chain" id="PRO_1000166841" description="Large ribosomal subunit protein uL6">
    <location>
        <begin position="1"/>
        <end position="177"/>
    </location>
</feature>
<proteinExistence type="inferred from homology"/>
<keyword id="KW-0687">Ribonucleoprotein</keyword>
<keyword id="KW-0689">Ribosomal protein</keyword>
<keyword id="KW-0694">RNA-binding</keyword>
<keyword id="KW-0699">rRNA-binding</keyword>
<gene>
    <name evidence="1" type="primary">rplF</name>
    <name type="ordered locus">VS_2816</name>
</gene>
<reference key="1">
    <citation type="submission" date="2009-02" db="EMBL/GenBank/DDBJ databases">
        <title>Vibrio splendidus str. LGP32 complete genome.</title>
        <authorList>
            <person name="Mazel D."/>
            <person name="Le Roux F."/>
        </authorList>
    </citation>
    <scope>NUCLEOTIDE SEQUENCE [LARGE SCALE GENOMIC DNA]</scope>
    <source>
        <strain>LGP32</strain>
    </source>
</reference>
<comment type="function">
    <text evidence="1">This protein binds to the 23S rRNA, and is important in its secondary structure. It is located near the subunit interface in the base of the L7/L12 stalk, and near the tRNA binding site of the peptidyltransferase center.</text>
</comment>
<comment type="subunit">
    <text evidence="1">Part of the 50S ribosomal subunit.</text>
</comment>
<comment type="similarity">
    <text evidence="1">Belongs to the universal ribosomal protein uL6 family.</text>
</comment>
<dbReference type="EMBL" id="FM954972">
    <property type="protein sequence ID" value="CAV20108.1"/>
    <property type="molecule type" value="Genomic_DNA"/>
</dbReference>
<dbReference type="SMR" id="B7VLE2"/>
<dbReference type="STRING" id="575788.VS_2816"/>
<dbReference type="KEGG" id="vsp:VS_2816"/>
<dbReference type="eggNOG" id="COG0097">
    <property type="taxonomic scope" value="Bacteria"/>
</dbReference>
<dbReference type="HOGENOM" id="CLU_065464_1_2_6"/>
<dbReference type="Proteomes" id="UP000009100">
    <property type="component" value="Chromosome 1"/>
</dbReference>
<dbReference type="GO" id="GO:0022625">
    <property type="term" value="C:cytosolic large ribosomal subunit"/>
    <property type="evidence" value="ECO:0007669"/>
    <property type="project" value="TreeGrafter"/>
</dbReference>
<dbReference type="GO" id="GO:0019843">
    <property type="term" value="F:rRNA binding"/>
    <property type="evidence" value="ECO:0007669"/>
    <property type="project" value="UniProtKB-UniRule"/>
</dbReference>
<dbReference type="GO" id="GO:0003735">
    <property type="term" value="F:structural constituent of ribosome"/>
    <property type="evidence" value="ECO:0007669"/>
    <property type="project" value="InterPro"/>
</dbReference>
<dbReference type="GO" id="GO:0002181">
    <property type="term" value="P:cytoplasmic translation"/>
    <property type="evidence" value="ECO:0007669"/>
    <property type="project" value="TreeGrafter"/>
</dbReference>
<dbReference type="FunFam" id="3.90.930.12:FF:000001">
    <property type="entry name" value="50S ribosomal protein L6"/>
    <property type="match status" value="1"/>
</dbReference>
<dbReference type="FunFam" id="3.90.930.12:FF:000002">
    <property type="entry name" value="50S ribosomal protein L6"/>
    <property type="match status" value="1"/>
</dbReference>
<dbReference type="Gene3D" id="3.90.930.12">
    <property type="entry name" value="Ribosomal protein L6, alpha-beta domain"/>
    <property type="match status" value="2"/>
</dbReference>
<dbReference type="HAMAP" id="MF_01365_B">
    <property type="entry name" value="Ribosomal_uL6_B"/>
    <property type="match status" value="1"/>
</dbReference>
<dbReference type="InterPro" id="IPR000702">
    <property type="entry name" value="Ribosomal_uL6-like"/>
</dbReference>
<dbReference type="InterPro" id="IPR036789">
    <property type="entry name" value="Ribosomal_uL6-like_a/b-dom_sf"/>
</dbReference>
<dbReference type="InterPro" id="IPR020040">
    <property type="entry name" value="Ribosomal_uL6_a/b-dom"/>
</dbReference>
<dbReference type="InterPro" id="IPR019906">
    <property type="entry name" value="Ribosomal_uL6_bac-type"/>
</dbReference>
<dbReference type="InterPro" id="IPR002358">
    <property type="entry name" value="Ribosomal_uL6_CS"/>
</dbReference>
<dbReference type="NCBIfam" id="TIGR03654">
    <property type="entry name" value="L6_bact"/>
    <property type="match status" value="1"/>
</dbReference>
<dbReference type="PANTHER" id="PTHR11655">
    <property type="entry name" value="60S/50S RIBOSOMAL PROTEIN L6/L9"/>
    <property type="match status" value="1"/>
</dbReference>
<dbReference type="PANTHER" id="PTHR11655:SF14">
    <property type="entry name" value="LARGE RIBOSOMAL SUBUNIT PROTEIN UL6M"/>
    <property type="match status" value="1"/>
</dbReference>
<dbReference type="Pfam" id="PF00347">
    <property type="entry name" value="Ribosomal_L6"/>
    <property type="match status" value="2"/>
</dbReference>
<dbReference type="PIRSF" id="PIRSF002162">
    <property type="entry name" value="Ribosomal_L6"/>
    <property type="match status" value="1"/>
</dbReference>
<dbReference type="PRINTS" id="PR00059">
    <property type="entry name" value="RIBOSOMALL6"/>
</dbReference>
<dbReference type="SUPFAM" id="SSF56053">
    <property type="entry name" value="Ribosomal protein L6"/>
    <property type="match status" value="2"/>
</dbReference>
<dbReference type="PROSITE" id="PS00525">
    <property type="entry name" value="RIBOSOMAL_L6_1"/>
    <property type="match status" value="1"/>
</dbReference>
<name>RL6_VIBA3</name>
<sequence length="177" mass="18730">MSRVAKAPVAIPAGVEVKLNGQEVTVKGSKGELTRVLNSAVVIAQEENNLTFGPKEGVTNAWAQAGTARALVNNMVVGVTEGFTKKLTLKGVGYRAAMKGNAVGLTLGFSHPVEHALPEGIKAECPSQTEIVITGCDKQVVGQVAADIRSYRAPEPYKGKGVRYADENVRTKEAKKK</sequence>
<organism>
    <name type="scientific">Vibrio atlanticus (strain LGP32)</name>
    <name type="common">Vibrio splendidus (strain Mel32)</name>
    <dbReference type="NCBI Taxonomy" id="575788"/>
    <lineage>
        <taxon>Bacteria</taxon>
        <taxon>Pseudomonadati</taxon>
        <taxon>Pseudomonadota</taxon>
        <taxon>Gammaproteobacteria</taxon>
        <taxon>Vibrionales</taxon>
        <taxon>Vibrionaceae</taxon>
        <taxon>Vibrio</taxon>
    </lineage>
</organism>
<protein>
    <recommendedName>
        <fullName evidence="1">Large ribosomal subunit protein uL6</fullName>
    </recommendedName>
    <alternativeName>
        <fullName evidence="2">50S ribosomal protein L6</fullName>
    </alternativeName>
</protein>
<accession>B7VLE2</accession>